<keyword id="KW-0001">2Fe-2S</keyword>
<keyword id="KW-0963">Cytoplasm</keyword>
<keyword id="KW-0408">Iron</keyword>
<keyword id="KW-0411">Iron-sulfur</keyword>
<keyword id="KW-0479">Metal-binding</keyword>
<keyword id="KW-0676">Redox-active center</keyword>
<keyword id="KW-1185">Reference proteome</keyword>
<evidence type="ECO:0000250" key="1"/>
<evidence type="ECO:0000255" key="2">
    <source>
        <dbReference type="PROSITE-ProRule" id="PRU00686"/>
    </source>
</evidence>
<evidence type="ECO:0000305" key="3"/>
<name>GLRX4_HAEIN</name>
<dbReference type="EMBL" id="L42023">
    <property type="protein sequence ID" value="AAC22820.1"/>
    <property type="status" value="ALT_INIT"/>
    <property type="molecule type" value="Genomic_DNA"/>
</dbReference>
<dbReference type="PIR" id="F64168">
    <property type="entry name" value="F64168"/>
</dbReference>
<dbReference type="RefSeq" id="NP_439323.2">
    <property type="nucleotide sequence ID" value="NC_000907.1"/>
</dbReference>
<dbReference type="SMR" id="P45085"/>
<dbReference type="STRING" id="71421.HI_1165"/>
<dbReference type="EnsemblBacteria" id="AAC22820">
    <property type="protein sequence ID" value="AAC22820"/>
    <property type="gene ID" value="HI_1165"/>
</dbReference>
<dbReference type="KEGG" id="hin:HI_1165"/>
<dbReference type="PATRIC" id="fig|71421.8.peg.1217"/>
<dbReference type="eggNOG" id="COG0278">
    <property type="taxonomic scope" value="Bacteria"/>
</dbReference>
<dbReference type="HOGENOM" id="CLU_026126_2_1_6"/>
<dbReference type="OrthoDB" id="9804115at2"/>
<dbReference type="PhylomeDB" id="P45085"/>
<dbReference type="BioCyc" id="HINF71421:G1GJ1-1199-MONOMER"/>
<dbReference type="Proteomes" id="UP000000579">
    <property type="component" value="Chromosome"/>
</dbReference>
<dbReference type="GO" id="GO:0005737">
    <property type="term" value="C:cytoplasm"/>
    <property type="evidence" value="ECO:0007669"/>
    <property type="project" value="UniProtKB-SubCell"/>
</dbReference>
<dbReference type="GO" id="GO:0051537">
    <property type="term" value="F:2 iron, 2 sulfur cluster binding"/>
    <property type="evidence" value="ECO:0007669"/>
    <property type="project" value="UniProtKB-KW"/>
</dbReference>
<dbReference type="GO" id="GO:0015036">
    <property type="term" value="F:disulfide oxidoreductase activity"/>
    <property type="evidence" value="ECO:0007669"/>
    <property type="project" value="InterPro"/>
</dbReference>
<dbReference type="GO" id="GO:0046872">
    <property type="term" value="F:metal ion binding"/>
    <property type="evidence" value="ECO:0007669"/>
    <property type="project" value="UniProtKB-KW"/>
</dbReference>
<dbReference type="CDD" id="cd03028">
    <property type="entry name" value="GRX_PICOT_like"/>
    <property type="match status" value="1"/>
</dbReference>
<dbReference type="FunFam" id="3.40.30.10:FF:000006">
    <property type="entry name" value="Glutaredoxin"/>
    <property type="match status" value="1"/>
</dbReference>
<dbReference type="Gene3D" id="3.40.30.10">
    <property type="entry name" value="Glutaredoxin"/>
    <property type="match status" value="1"/>
</dbReference>
<dbReference type="InterPro" id="IPR002109">
    <property type="entry name" value="Glutaredoxin"/>
</dbReference>
<dbReference type="InterPro" id="IPR033658">
    <property type="entry name" value="GRX_PICOT-like"/>
</dbReference>
<dbReference type="InterPro" id="IPR014434">
    <property type="entry name" value="Monothiol_GRX"/>
</dbReference>
<dbReference type="InterPro" id="IPR004480">
    <property type="entry name" value="Monothiol_GRX-rel"/>
</dbReference>
<dbReference type="InterPro" id="IPR036249">
    <property type="entry name" value="Thioredoxin-like_sf"/>
</dbReference>
<dbReference type="NCBIfam" id="TIGR00365">
    <property type="entry name" value="Grx4 family monothiol glutaredoxin"/>
    <property type="match status" value="1"/>
</dbReference>
<dbReference type="PANTHER" id="PTHR10293">
    <property type="entry name" value="GLUTAREDOXIN FAMILY MEMBER"/>
    <property type="match status" value="1"/>
</dbReference>
<dbReference type="PANTHER" id="PTHR10293:SF72">
    <property type="entry name" value="MONOTHIOL GLUTAREDOXIN-S14, CHLOROPLASTIC"/>
    <property type="match status" value="1"/>
</dbReference>
<dbReference type="Pfam" id="PF00462">
    <property type="entry name" value="Glutaredoxin"/>
    <property type="match status" value="1"/>
</dbReference>
<dbReference type="PIRSF" id="PIRSF005894">
    <property type="entry name" value="Monothiol_GRX"/>
    <property type="match status" value="1"/>
</dbReference>
<dbReference type="SUPFAM" id="SSF52833">
    <property type="entry name" value="Thioredoxin-like"/>
    <property type="match status" value="1"/>
</dbReference>
<dbReference type="PROSITE" id="PS51354">
    <property type="entry name" value="GLUTAREDOXIN_2"/>
    <property type="match status" value="1"/>
</dbReference>
<comment type="function">
    <text evidence="1">Monothiol glutaredoxin involved in the biogenesis of iron-sulfur clusters.</text>
</comment>
<comment type="subunit">
    <text evidence="1">Homodimer.</text>
</comment>
<comment type="subcellular location">
    <subcellularLocation>
        <location evidence="1">Cytoplasm</location>
    </subcellularLocation>
</comment>
<comment type="similarity">
    <text evidence="3">Belongs to the glutaredoxin family. Monothiol subfamily.</text>
</comment>
<comment type="sequence caution" evidence="3">
    <conflict type="erroneous initiation">
        <sequence resource="EMBL-CDS" id="AAC22820"/>
    </conflict>
    <text>Extended N-terminus.</text>
</comment>
<protein>
    <recommendedName>
        <fullName>Glutaredoxin 4</fullName>
        <shortName>Grx4</shortName>
    </recommendedName>
    <alternativeName>
        <fullName>Monothiol glutaredoxin</fullName>
    </alternativeName>
</protein>
<sequence length="107" mass="11941">METLDKIKKQISENPILIYMKGSPKLPSCGFPARASEALMHCKVPFGYVDILQHPDIRAELPTYANWPTFPQLWVEGELIGGCDIILEMYQAGELQTLLAEVAAKHA</sequence>
<reference key="1">
    <citation type="journal article" date="1995" name="Science">
        <title>Whole-genome random sequencing and assembly of Haemophilus influenzae Rd.</title>
        <authorList>
            <person name="Fleischmann R.D."/>
            <person name="Adams M.D."/>
            <person name="White O."/>
            <person name="Clayton R.A."/>
            <person name="Kirkness E.F."/>
            <person name="Kerlavage A.R."/>
            <person name="Bult C.J."/>
            <person name="Tomb J.-F."/>
            <person name="Dougherty B.A."/>
            <person name="Merrick J.M."/>
            <person name="McKenney K."/>
            <person name="Sutton G.G."/>
            <person name="FitzHugh W."/>
            <person name="Fields C.A."/>
            <person name="Gocayne J.D."/>
            <person name="Scott J.D."/>
            <person name="Shirley R."/>
            <person name="Liu L.-I."/>
            <person name="Glodek A."/>
            <person name="Kelley J.M."/>
            <person name="Weidman J.F."/>
            <person name="Phillips C.A."/>
            <person name="Spriggs T."/>
            <person name="Hedblom E."/>
            <person name="Cotton M.D."/>
            <person name="Utterback T.R."/>
            <person name="Hanna M.C."/>
            <person name="Nguyen D.T."/>
            <person name="Saudek D.M."/>
            <person name="Brandon R.C."/>
            <person name="Fine L.D."/>
            <person name="Fritchman J.L."/>
            <person name="Fuhrmann J.L."/>
            <person name="Geoghagen N.S.M."/>
            <person name="Gnehm C.L."/>
            <person name="McDonald L.A."/>
            <person name="Small K.V."/>
            <person name="Fraser C.M."/>
            <person name="Smith H.O."/>
            <person name="Venter J.C."/>
        </authorList>
    </citation>
    <scope>NUCLEOTIDE SEQUENCE [LARGE SCALE GENOMIC DNA]</scope>
    <source>
        <strain>ATCC 51907 / DSM 11121 / KW20 / Rd</strain>
    </source>
</reference>
<accession>P45085</accession>
<organism>
    <name type="scientific">Haemophilus influenzae (strain ATCC 51907 / DSM 11121 / KW20 / Rd)</name>
    <dbReference type="NCBI Taxonomy" id="71421"/>
    <lineage>
        <taxon>Bacteria</taxon>
        <taxon>Pseudomonadati</taxon>
        <taxon>Pseudomonadota</taxon>
        <taxon>Gammaproteobacteria</taxon>
        <taxon>Pasteurellales</taxon>
        <taxon>Pasteurellaceae</taxon>
        <taxon>Haemophilus</taxon>
    </lineage>
</organism>
<proteinExistence type="inferred from homology"/>
<gene>
    <name type="primary">grxD</name>
    <name type="ordered locus">HI_1165</name>
</gene>
<feature type="chain" id="PRO_0000102261" description="Glutaredoxin 4">
    <location>
        <begin position="1"/>
        <end position="107"/>
    </location>
</feature>
<feature type="domain" description="Glutaredoxin" evidence="2">
    <location>
        <begin position="4"/>
        <end position="106"/>
    </location>
</feature>
<feature type="binding site" evidence="1">
    <location>
        <position position="21"/>
    </location>
    <ligand>
        <name>glutathione</name>
        <dbReference type="ChEBI" id="CHEBI:57925"/>
    </ligand>
</feature>
<feature type="binding site" evidence="1">
    <location>
        <position position="29"/>
    </location>
    <ligand>
        <name>[2Fe-2S] cluster</name>
        <dbReference type="ChEBI" id="CHEBI:190135"/>
        <note>ligand shared between dimeric partners</note>
    </ligand>
</feature>
<feature type="binding site" evidence="1">
    <location>
        <position position="58"/>
    </location>
    <ligand>
        <name>glutathione</name>
        <dbReference type="ChEBI" id="CHEBI:57925"/>
    </ligand>
</feature>
<feature type="binding site" evidence="1">
    <location>
        <position position="70"/>
    </location>
    <ligand>
        <name>glutathione</name>
        <dbReference type="ChEBI" id="CHEBI:57925"/>
    </ligand>
</feature>
<feature type="binding site" evidence="1">
    <location>
        <begin position="83"/>
        <end position="84"/>
    </location>
    <ligand>
        <name>glutathione</name>
        <dbReference type="ChEBI" id="CHEBI:57925"/>
    </ligand>
</feature>